<comment type="function">
    <text evidence="1">F(1)F(0) ATP synthase produces ATP from ADP in the presence of a proton or sodium gradient. F-type ATPases consist of two structural domains, F(1) containing the extramembraneous catalytic core and F(0) containing the membrane proton channel, linked together by a central stalk and a peripheral stalk. During catalysis, ATP synthesis in the catalytic domain of F(1) is coupled via a rotary mechanism of the central stalk subunits to proton translocation.</text>
</comment>
<comment type="function">
    <text evidence="1">Key component of the F(0) channel; it plays a direct role in translocation across the membrane. A homomeric c-ring of between 10-14 subunits forms the central stalk rotor element with the F(1) delta and epsilon subunits.</text>
</comment>
<comment type="subunit">
    <text evidence="1">F-type ATPases have 2 components, F(1) - the catalytic core - and F(0) - the membrane proton channel. F(1) has five subunits: alpha(3), beta(3), gamma(1), delta(1), epsilon(1). F(0) has three main subunits: a(1), b(2) and c(10-14). The alpha and beta chains form an alternating ring which encloses part of the gamma chain. F(1) is attached to F(0) by a central stalk formed by the gamma and epsilon chains, while a peripheral stalk is formed by the delta and b chains.</text>
</comment>
<comment type="subcellular location">
    <subcellularLocation>
        <location evidence="1">Cell inner membrane</location>
        <topology evidence="1">Multi-pass membrane protein</topology>
    </subcellularLocation>
</comment>
<comment type="similarity">
    <text evidence="1">Belongs to the ATPase C chain family.</text>
</comment>
<sequence length="90" mass="9130">MQFFVYSAVAAGFGIAIAAFGCGIGQGMAVRGAVEGIARNPEASGKVTVTMLIGLAMIESLSIYALVVSLILIYANPVSTAMQGFVGLGK</sequence>
<evidence type="ECO:0000255" key="1">
    <source>
        <dbReference type="HAMAP-Rule" id="MF_01396"/>
    </source>
</evidence>
<gene>
    <name evidence="1" type="primary">atpE</name>
    <name type="ordered locus">Sfum_1604</name>
</gene>
<keyword id="KW-0066">ATP synthesis</keyword>
<keyword id="KW-0997">Cell inner membrane</keyword>
<keyword id="KW-1003">Cell membrane</keyword>
<keyword id="KW-0138">CF(0)</keyword>
<keyword id="KW-0375">Hydrogen ion transport</keyword>
<keyword id="KW-0406">Ion transport</keyword>
<keyword id="KW-0446">Lipid-binding</keyword>
<keyword id="KW-0472">Membrane</keyword>
<keyword id="KW-1185">Reference proteome</keyword>
<keyword id="KW-0812">Transmembrane</keyword>
<keyword id="KW-1133">Transmembrane helix</keyword>
<keyword id="KW-0813">Transport</keyword>
<accession>A0LIN9</accession>
<name>ATPL_SYNFM</name>
<organism>
    <name type="scientific">Syntrophobacter fumaroxidans (strain DSM 10017 / MPOB)</name>
    <dbReference type="NCBI Taxonomy" id="335543"/>
    <lineage>
        <taxon>Bacteria</taxon>
        <taxon>Pseudomonadati</taxon>
        <taxon>Thermodesulfobacteriota</taxon>
        <taxon>Syntrophobacteria</taxon>
        <taxon>Syntrophobacterales</taxon>
        <taxon>Syntrophobacteraceae</taxon>
        <taxon>Syntrophobacter</taxon>
    </lineage>
</organism>
<feature type="chain" id="PRO_5000166232" description="ATP synthase subunit c">
    <location>
        <begin position="1"/>
        <end position="90"/>
    </location>
</feature>
<feature type="transmembrane region" description="Helical" evidence="1">
    <location>
        <begin position="4"/>
        <end position="24"/>
    </location>
</feature>
<feature type="transmembrane region" description="Helical" evidence="1">
    <location>
        <begin position="53"/>
        <end position="73"/>
    </location>
</feature>
<feature type="site" description="Reversibly protonated during proton transport" evidence="1">
    <location>
        <position position="59"/>
    </location>
</feature>
<protein>
    <recommendedName>
        <fullName evidence="1">ATP synthase subunit c</fullName>
    </recommendedName>
    <alternativeName>
        <fullName evidence="1">ATP synthase F(0) sector subunit c</fullName>
    </alternativeName>
    <alternativeName>
        <fullName evidence="1">F-type ATPase subunit c</fullName>
        <shortName evidence="1">F-ATPase subunit c</shortName>
    </alternativeName>
    <alternativeName>
        <fullName evidence="1">Lipid-binding protein</fullName>
    </alternativeName>
</protein>
<reference key="1">
    <citation type="submission" date="2006-10" db="EMBL/GenBank/DDBJ databases">
        <title>Complete sequence of Syntrophobacter fumaroxidans MPOB.</title>
        <authorList>
            <consortium name="US DOE Joint Genome Institute"/>
            <person name="Copeland A."/>
            <person name="Lucas S."/>
            <person name="Lapidus A."/>
            <person name="Barry K."/>
            <person name="Detter J.C."/>
            <person name="Glavina del Rio T."/>
            <person name="Hammon N."/>
            <person name="Israni S."/>
            <person name="Pitluck S."/>
            <person name="Goltsman E.G."/>
            <person name="Martinez M."/>
            <person name="Schmutz J."/>
            <person name="Larimer F."/>
            <person name="Land M."/>
            <person name="Hauser L."/>
            <person name="Kyrpides N."/>
            <person name="Kim E."/>
            <person name="Boone D.R."/>
            <person name="Brockman F."/>
            <person name="Culley D."/>
            <person name="Ferry J."/>
            <person name="Gunsalus R."/>
            <person name="McInerney M.J."/>
            <person name="Morrison M."/>
            <person name="Plugge C."/>
            <person name="Rohlin L."/>
            <person name="Scholten J."/>
            <person name="Sieber J."/>
            <person name="Stams A.J.M."/>
            <person name="Worm P."/>
            <person name="Henstra A.M."/>
            <person name="Richardson P."/>
        </authorList>
    </citation>
    <scope>NUCLEOTIDE SEQUENCE [LARGE SCALE GENOMIC DNA]</scope>
    <source>
        <strain>DSM 10017 / MPOB</strain>
    </source>
</reference>
<proteinExistence type="inferred from homology"/>
<dbReference type="EMBL" id="CP000478">
    <property type="protein sequence ID" value="ABK17291.1"/>
    <property type="molecule type" value="Genomic_DNA"/>
</dbReference>
<dbReference type="SMR" id="A0LIN9"/>
<dbReference type="STRING" id="335543.Sfum_1604"/>
<dbReference type="KEGG" id="sfu:Sfum_1604"/>
<dbReference type="eggNOG" id="COG0636">
    <property type="taxonomic scope" value="Bacteria"/>
</dbReference>
<dbReference type="HOGENOM" id="CLU_148047_2_0_7"/>
<dbReference type="InParanoid" id="A0LIN9"/>
<dbReference type="Proteomes" id="UP000001784">
    <property type="component" value="Chromosome"/>
</dbReference>
<dbReference type="GO" id="GO:0005886">
    <property type="term" value="C:plasma membrane"/>
    <property type="evidence" value="ECO:0007669"/>
    <property type="project" value="UniProtKB-SubCell"/>
</dbReference>
<dbReference type="GO" id="GO:0045259">
    <property type="term" value="C:proton-transporting ATP synthase complex"/>
    <property type="evidence" value="ECO:0007669"/>
    <property type="project" value="UniProtKB-KW"/>
</dbReference>
<dbReference type="GO" id="GO:0033177">
    <property type="term" value="C:proton-transporting two-sector ATPase complex, proton-transporting domain"/>
    <property type="evidence" value="ECO:0007669"/>
    <property type="project" value="InterPro"/>
</dbReference>
<dbReference type="GO" id="GO:0008289">
    <property type="term" value="F:lipid binding"/>
    <property type="evidence" value="ECO:0007669"/>
    <property type="project" value="UniProtKB-KW"/>
</dbReference>
<dbReference type="GO" id="GO:0046933">
    <property type="term" value="F:proton-transporting ATP synthase activity, rotational mechanism"/>
    <property type="evidence" value="ECO:0007669"/>
    <property type="project" value="UniProtKB-UniRule"/>
</dbReference>
<dbReference type="CDD" id="cd18121">
    <property type="entry name" value="ATP-synt_Fo_c"/>
    <property type="match status" value="1"/>
</dbReference>
<dbReference type="Gene3D" id="1.20.120.610">
    <property type="entry name" value="lithium bound rotor ring of v- atpase"/>
    <property type="match status" value="1"/>
</dbReference>
<dbReference type="HAMAP" id="MF_01396">
    <property type="entry name" value="ATP_synth_c_bact"/>
    <property type="match status" value="1"/>
</dbReference>
<dbReference type="InterPro" id="IPR005953">
    <property type="entry name" value="ATP_synth_csu_bac/chlpt"/>
</dbReference>
<dbReference type="InterPro" id="IPR000454">
    <property type="entry name" value="ATP_synth_F0_csu"/>
</dbReference>
<dbReference type="InterPro" id="IPR020537">
    <property type="entry name" value="ATP_synth_F0_csu_DDCD_BS"/>
</dbReference>
<dbReference type="InterPro" id="IPR002379">
    <property type="entry name" value="ATPase_proteolipid_c-like_dom"/>
</dbReference>
<dbReference type="InterPro" id="IPR035921">
    <property type="entry name" value="F/V-ATP_Csub_sf"/>
</dbReference>
<dbReference type="NCBIfam" id="TIGR01260">
    <property type="entry name" value="ATP_synt_c"/>
    <property type="match status" value="1"/>
</dbReference>
<dbReference type="Pfam" id="PF00137">
    <property type="entry name" value="ATP-synt_C"/>
    <property type="match status" value="1"/>
</dbReference>
<dbReference type="PRINTS" id="PR00124">
    <property type="entry name" value="ATPASEC"/>
</dbReference>
<dbReference type="SUPFAM" id="SSF81333">
    <property type="entry name" value="F1F0 ATP synthase subunit C"/>
    <property type="match status" value="1"/>
</dbReference>
<dbReference type="PROSITE" id="PS00605">
    <property type="entry name" value="ATPASE_C"/>
    <property type="match status" value="1"/>
</dbReference>